<protein>
    <recommendedName>
        <fullName evidence="1">Low affinity potassium transport system protein Kup</fullName>
    </recommendedName>
    <alternativeName>
        <fullName evidence="1">Kup system potassium uptake protein</fullName>
    </alternativeName>
</protein>
<sequence>MSTDNKQSLPAITLAAIGVVYGDIGTSPLYTLRECLSGQFGFGVERDAVFGFLSLIFWLLIFVVSIKYLTFVMRADNAGEGGILTLMSLAGRNTSARTTSMLVIMGLIGGSFFYGEVVITPAISVMSAIEGLEIVAPQLDTWIVPLSIIVLTLLFMIQKHGTAMVGKLFAPIMLTWFLILAGLGLRSIIANPEVLHALNPMWAVHFFLEYKTVSFIALGAVVLSITGVEALYADMGHFGKFPIRLAWFTVVLPSLTLNYFGQGALLLKNPEAIKNPFFLLAPDWALIPLLIIAALATVIASQAVISGVFSLTRQAVRLGYLSPMRIIHTSEMESGQIYIPFVNWMLYVAVVIVIVSFEHSSNLAAAYGIAVTGTMVLTSILSTTVARQNWHWNKYFVALILIAFLCVDIPLFTANLDKLLSGGWLPLSLGTVMFIVMTTWKSERFRLLRRMHEHGNSLEAMIASLEKSPPVRVPGTAVYMSRAINVIPFALMHNLKHNKVLHERVILLTLRTEDAPYVHNVRRVQIEQLSPTFWRVVASYGWRETPNVEEVFHRCGLEGLSCRMMETSFFMSHESLILGKRPWYLRLRGKLYLLLQRNALRAPDQFEIPPNRVIELGTQVEI</sequence>
<organism>
    <name type="scientific">Escherichia coli O7:K1 (strain IAI39 / ExPEC)</name>
    <dbReference type="NCBI Taxonomy" id="585057"/>
    <lineage>
        <taxon>Bacteria</taxon>
        <taxon>Pseudomonadati</taxon>
        <taxon>Pseudomonadota</taxon>
        <taxon>Gammaproteobacteria</taxon>
        <taxon>Enterobacterales</taxon>
        <taxon>Enterobacteriaceae</taxon>
        <taxon>Escherichia</taxon>
    </lineage>
</organism>
<gene>
    <name evidence="1" type="primary">kup</name>
    <name type="ordered locus">ECIAI39_4352</name>
</gene>
<reference key="1">
    <citation type="journal article" date="2009" name="PLoS Genet.">
        <title>Organised genome dynamics in the Escherichia coli species results in highly diverse adaptive paths.</title>
        <authorList>
            <person name="Touchon M."/>
            <person name="Hoede C."/>
            <person name="Tenaillon O."/>
            <person name="Barbe V."/>
            <person name="Baeriswyl S."/>
            <person name="Bidet P."/>
            <person name="Bingen E."/>
            <person name="Bonacorsi S."/>
            <person name="Bouchier C."/>
            <person name="Bouvet O."/>
            <person name="Calteau A."/>
            <person name="Chiapello H."/>
            <person name="Clermont O."/>
            <person name="Cruveiller S."/>
            <person name="Danchin A."/>
            <person name="Diard M."/>
            <person name="Dossat C."/>
            <person name="Karoui M.E."/>
            <person name="Frapy E."/>
            <person name="Garry L."/>
            <person name="Ghigo J.M."/>
            <person name="Gilles A.M."/>
            <person name="Johnson J."/>
            <person name="Le Bouguenec C."/>
            <person name="Lescat M."/>
            <person name="Mangenot S."/>
            <person name="Martinez-Jehanne V."/>
            <person name="Matic I."/>
            <person name="Nassif X."/>
            <person name="Oztas S."/>
            <person name="Petit M.A."/>
            <person name="Pichon C."/>
            <person name="Rouy Z."/>
            <person name="Ruf C.S."/>
            <person name="Schneider D."/>
            <person name="Tourret J."/>
            <person name="Vacherie B."/>
            <person name="Vallenet D."/>
            <person name="Medigue C."/>
            <person name="Rocha E.P.C."/>
            <person name="Denamur E."/>
        </authorList>
    </citation>
    <scope>NUCLEOTIDE SEQUENCE [LARGE SCALE GENOMIC DNA]</scope>
    <source>
        <strain>IAI39 / ExPEC</strain>
    </source>
</reference>
<proteinExistence type="inferred from homology"/>
<comment type="function">
    <text evidence="1">Responsible for the low-affinity transport of potassium into the cell. Likely operates as a K(+):H(+) symporter.</text>
</comment>
<comment type="catalytic activity">
    <reaction evidence="1">
        <text>K(+)(in) + H(+)(in) = K(+)(out) + H(+)(out)</text>
        <dbReference type="Rhea" id="RHEA:28490"/>
        <dbReference type="ChEBI" id="CHEBI:15378"/>
        <dbReference type="ChEBI" id="CHEBI:29103"/>
    </reaction>
    <physiologicalReaction direction="right-to-left" evidence="1">
        <dbReference type="Rhea" id="RHEA:28492"/>
    </physiologicalReaction>
</comment>
<comment type="subcellular location">
    <subcellularLocation>
        <location evidence="1">Cell inner membrane</location>
        <topology evidence="1">Multi-pass membrane protein</topology>
    </subcellularLocation>
</comment>
<comment type="similarity">
    <text evidence="1">Belongs to the HAK/KUP transporter (TC 2.A.72) family.</text>
</comment>
<name>KUP_ECO7I</name>
<keyword id="KW-0997">Cell inner membrane</keyword>
<keyword id="KW-1003">Cell membrane</keyword>
<keyword id="KW-0406">Ion transport</keyword>
<keyword id="KW-0472">Membrane</keyword>
<keyword id="KW-0630">Potassium</keyword>
<keyword id="KW-0633">Potassium transport</keyword>
<keyword id="KW-0769">Symport</keyword>
<keyword id="KW-0812">Transmembrane</keyword>
<keyword id="KW-1133">Transmembrane helix</keyword>
<keyword id="KW-0813">Transport</keyword>
<dbReference type="EMBL" id="CU928164">
    <property type="protein sequence ID" value="CAR20458.1"/>
    <property type="molecule type" value="Genomic_DNA"/>
</dbReference>
<dbReference type="RefSeq" id="WP_000102319.1">
    <property type="nucleotide sequence ID" value="NC_011750.1"/>
</dbReference>
<dbReference type="RefSeq" id="YP_002410227.1">
    <property type="nucleotide sequence ID" value="NC_011750.1"/>
</dbReference>
<dbReference type="STRING" id="585057.ECIAI39_4352"/>
<dbReference type="GeneID" id="75205465"/>
<dbReference type="KEGG" id="ect:ECIAI39_4352"/>
<dbReference type="PATRIC" id="fig|585057.6.peg.4498"/>
<dbReference type="HOGENOM" id="CLU_008142_4_2_6"/>
<dbReference type="Proteomes" id="UP000000749">
    <property type="component" value="Chromosome"/>
</dbReference>
<dbReference type="GO" id="GO:0005886">
    <property type="term" value="C:plasma membrane"/>
    <property type="evidence" value="ECO:0007669"/>
    <property type="project" value="UniProtKB-SubCell"/>
</dbReference>
<dbReference type="GO" id="GO:0015079">
    <property type="term" value="F:potassium ion transmembrane transporter activity"/>
    <property type="evidence" value="ECO:0007669"/>
    <property type="project" value="UniProtKB-UniRule"/>
</dbReference>
<dbReference type="GO" id="GO:0015293">
    <property type="term" value="F:symporter activity"/>
    <property type="evidence" value="ECO:0007669"/>
    <property type="project" value="UniProtKB-UniRule"/>
</dbReference>
<dbReference type="HAMAP" id="MF_01522">
    <property type="entry name" value="Kup"/>
    <property type="match status" value="1"/>
</dbReference>
<dbReference type="InterPro" id="IPR003855">
    <property type="entry name" value="K+_transporter"/>
</dbReference>
<dbReference type="InterPro" id="IPR053952">
    <property type="entry name" value="K_trans_C"/>
</dbReference>
<dbReference type="InterPro" id="IPR053951">
    <property type="entry name" value="K_trans_N"/>
</dbReference>
<dbReference type="InterPro" id="IPR023051">
    <property type="entry name" value="Kup"/>
</dbReference>
<dbReference type="NCBIfam" id="TIGR00794">
    <property type="entry name" value="kup"/>
    <property type="match status" value="1"/>
</dbReference>
<dbReference type="NCBIfam" id="NF008015">
    <property type="entry name" value="PRK10745.1"/>
    <property type="match status" value="1"/>
</dbReference>
<dbReference type="PANTHER" id="PTHR30540:SF79">
    <property type="entry name" value="LOW AFFINITY POTASSIUM TRANSPORT SYSTEM PROTEIN KUP"/>
    <property type="match status" value="1"/>
</dbReference>
<dbReference type="PANTHER" id="PTHR30540">
    <property type="entry name" value="OSMOTIC STRESS POTASSIUM TRANSPORTER"/>
    <property type="match status" value="1"/>
</dbReference>
<dbReference type="Pfam" id="PF02705">
    <property type="entry name" value="K_trans"/>
    <property type="match status" value="1"/>
</dbReference>
<dbReference type="Pfam" id="PF22776">
    <property type="entry name" value="K_trans_C"/>
    <property type="match status" value="1"/>
</dbReference>
<accession>B7NR50</accession>
<feature type="chain" id="PRO_1000190268" description="Low affinity potassium transport system protein Kup">
    <location>
        <begin position="1"/>
        <end position="622"/>
    </location>
</feature>
<feature type="transmembrane region" description="Helical" evidence="1">
    <location>
        <begin position="9"/>
        <end position="29"/>
    </location>
</feature>
<feature type="transmembrane region" description="Helical" evidence="1">
    <location>
        <begin position="49"/>
        <end position="69"/>
    </location>
</feature>
<feature type="transmembrane region" description="Helical" evidence="1">
    <location>
        <begin position="103"/>
        <end position="123"/>
    </location>
</feature>
<feature type="transmembrane region" description="Helical" evidence="1">
    <location>
        <begin position="137"/>
        <end position="157"/>
    </location>
</feature>
<feature type="transmembrane region" description="Helical" evidence="1">
    <location>
        <begin position="165"/>
        <end position="185"/>
    </location>
</feature>
<feature type="transmembrane region" description="Helical" evidence="1">
    <location>
        <begin position="213"/>
        <end position="233"/>
    </location>
</feature>
<feature type="transmembrane region" description="Helical" evidence="1">
    <location>
        <begin position="247"/>
        <end position="267"/>
    </location>
</feature>
<feature type="transmembrane region" description="Helical" evidence="1">
    <location>
        <begin position="276"/>
        <end position="296"/>
    </location>
</feature>
<feature type="transmembrane region" description="Helical" evidence="1">
    <location>
        <begin position="337"/>
        <end position="357"/>
    </location>
</feature>
<feature type="transmembrane region" description="Helical" evidence="1">
    <location>
        <begin position="363"/>
        <end position="383"/>
    </location>
</feature>
<feature type="transmembrane region" description="Helical" evidence="1">
    <location>
        <begin position="396"/>
        <end position="416"/>
    </location>
</feature>
<feature type="transmembrane region" description="Helical" evidence="1">
    <location>
        <begin position="419"/>
        <end position="439"/>
    </location>
</feature>
<evidence type="ECO:0000255" key="1">
    <source>
        <dbReference type="HAMAP-Rule" id="MF_01522"/>
    </source>
</evidence>